<feature type="chain" id="PRO_0000117645" description="NADH-ubiquinone oxidoreductase chain 2">
    <location>
        <begin position="1"/>
        <end position="345"/>
    </location>
</feature>
<feature type="transmembrane region" description="Helical" evidence="2">
    <location>
        <begin position="1"/>
        <end position="21"/>
    </location>
</feature>
<feature type="transmembrane region" description="Helical" evidence="2">
    <location>
        <begin position="60"/>
        <end position="80"/>
    </location>
</feature>
<feature type="transmembrane region" description="Helical" evidence="2">
    <location>
        <begin position="110"/>
        <end position="130"/>
    </location>
</feature>
<feature type="transmembrane region" description="Helical" evidence="2">
    <location>
        <begin position="149"/>
        <end position="169"/>
    </location>
</feature>
<feature type="transmembrane region" description="Helical" evidence="2">
    <location>
        <begin position="179"/>
        <end position="196"/>
    </location>
</feature>
<feature type="transmembrane region" description="Helical" evidence="2">
    <location>
        <begin position="200"/>
        <end position="222"/>
    </location>
</feature>
<feature type="transmembrane region" description="Helical" evidence="2">
    <location>
        <begin position="240"/>
        <end position="260"/>
    </location>
</feature>
<feature type="transmembrane region" description="Helical" evidence="2">
    <location>
        <begin position="274"/>
        <end position="294"/>
    </location>
</feature>
<feature type="transmembrane region" description="Helical" evidence="2">
    <location>
        <begin position="323"/>
        <end position="343"/>
    </location>
</feature>
<protein>
    <recommendedName>
        <fullName>NADH-ubiquinone oxidoreductase chain 2</fullName>
        <ecNumber>7.1.1.2</ecNumber>
    </recommendedName>
    <alternativeName>
        <fullName>NADH dehydrogenase subunit 2</fullName>
    </alternativeName>
</protein>
<organism>
    <name type="scientific">Varanus melinus</name>
    <name type="common">Quince monitor lizard</name>
    <dbReference type="NCBI Taxonomy" id="169846"/>
    <lineage>
        <taxon>Eukaryota</taxon>
        <taxon>Metazoa</taxon>
        <taxon>Chordata</taxon>
        <taxon>Craniata</taxon>
        <taxon>Vertebrata</taxon>
        <taxon>Euteleostomi</taxon>
        <taxon>Lepidosauria</taxon>
        <taxon>Squamata</taxon>
        <taxon>Bifurcata</taxon>
        <taxon>Unidentata</taxon>
        <taxon>Episquamata</taxon>
        <taxon>Toxicofera</taxon>
        <taxon>Anguimorpha</taxon>
        <taxon>Paleoanguimorpha</taxon>
        <taxon>Varanoidea</taxon>
        <taxon>Varanidae</taxon>
        <taxon>Varanus</taxon>
    </lineage>
</organism>
<gene>
    <name type="primary">MT-ND2</name>
    <name type="synonym">MTND2</name>
    <name type="synonym">NADH2</name>
    <name type="synonym">ND2</name>
</gene>
<name>NU2M_VARML</name>
<sequence length="345" mass="37899">MNPIINFILLSSMIAGTVLTMTSHHWVSAWLGLELNTLAIIPIISKTHHPRATEASTKYFLIQAASSALMLFAGIINAHLYGTWDITQISNNPTKILLTAALATKLGLAPIHFWLPEILQGVPMLTALIITTWQKIAPMALLITTWNTIPTPMTLTMGFLSVIIGGLGGLNQTQLRKMMAFSSIAHLGWMIVIITITPSLTLFNLVLYITFTSSTMLIMHLTMSKTLQNAMLMSSHSSTTANLFLLSLLSLGGLPPLSGFSPKWLILQELITHNLVPLATTMAITTLFSLMFYLRTTYISAMTLPPSTTPIKNIWRLKPNSSTTMLSMFSLATLFLLPITPTMTQ</sequence>
<geneLocation type="mitochondrion"/>
<keyword id="KW-0249">Electron transport</keyword>
<keyword id="KW-0472">Membrane</keyword>
<keyword id="KW-0496">Mitochondrion</keyword>
<keyword id="KW-0999">Mitochondrion inner membrane</keyword>
<keyword id="KW-0520">NAD</keyword>
<keyword id="KW-0679">Respiratory chain</keyword>
<keyword id="KW-1278">Translocase</keyword>
<keyword id="KW-0812">Transmembrane</keyword>
<keyword id="KW-1133">Transmembrane helix</keyword>
<keyword id="KW-0813">Transport</keyword>
<keyword id="KW-0830">Ubiquinone</keyword>
<proteinExistence type="inferred from homology"/>
<comment type="function">
    <text evidence="1">Core subunit of the mitochondrial membrane respiratory chain NADH dehydrogenase (Complex I) that is believed to belong to the minimal assembly required for catalysis. Complex I functions in the transfer of electrons from NADH to the respiratory chain. The immediate electron acceptor for the enzyme is believed to be ubiquinone (By similarity).</text>
</comment>
<comment type="catalytic activity">
    <reaction>
        <text>a ubiquinone + NADH + 5 H(+)(in) = a ubiquinol + NAD(+) + 4 H(+)(out)</text>
        <dbReference type="Rhea" id="RHEA:29091"/>
        <dbReference type="Rhea" id="RHEA-COMP:9565"/>
        <dbReference type="Rhea" id="RHEA-COMP:9566"/>
        <dbReference type="ChEBI" id="CHEBI:15378"/>
        <dbReference type="ChEBI" id="CHEBI:16389"/>
        <dbReference type="ChEBI" id="CHEBI:17976"/>
        <dbReference type="ChEBI" id="CHEBI:57540"/>
        <dbReference type="ChEBI" id="CHEBI:57945"/>
        <dbReference type="EC" id="7.1.1.2"/>
    </reaction>
</comment>
<comment type="subcellular location">
    <subcellularLocation>
        <location>Mitochondrion inner membrane</location>
        <topology>Multi-pass membrane protein</topology>
    </subcellularLocation>
</comment>
<comment type="similarity">
    <text evidence="3">Belongs to the complex I subunit 2 family.</text>
</comment>
<reference key="1">
    <citation type="journal article" date="2001" name="Cladistics">
        <title>Mitochondrial DNA evidence and evolution in Varanoidea (Squamata).</title>
        <authorList>
            <person name="Ast J.C."/>
        </authorList>
    </citation>
    <scope>NUCLEOTIDE SEQUENCE [GENOMIC DNA]</scope>
    <source>
        <strain>Isolate UMFS 10164</strain>
    </source>
</reference>
<accession>Q94VE5</accession>
<evidence type="ECO:0000250" key="1"/>
<evidence type="ECO:0000255" key="2"/>
<evidence type="ECO:0000305" key="3"/>
<dbReference type="EC" id="7.1.1.2"/>
<dbReference type="EMBL" id="AF407511">
    <property type="protein sequence ID" value="AAL10086.1"/>
    <property type="molecule type" value="Genomic_DNA"/>
</dbReference>
<dbReference type="SMR" id="Q94VE5"/>
<dbReference type="GO" id="GO:0005743">
    <property type="term" value="C:mitochondrial inner membrane"/>
    <property type="evidence" value="ECO:0007669"/>
    <property type="project" value="UniProtKB-SubCell"/>
</dbReference>
<dbReference type="GO" id="GO:0008137">
    <property type="term" value="F:NADH dehydrogenase (ubiquinone) activity"/>
    <property type="evidence" value="ECO:0007669"/>
    <property type="project" value="UniProtKB-EC"/>
</dbReference>
<dbReference type="GO" id="GO:0006120">
    <property type="term" value="P:mitochondrial electron transport, NADH to ubiquinone"/>
    <property type="evidence" value="ECO:0007669"/>
    <property type="project" value="InterPro"/>
</dbReference>
<dbReference type="InterPro" id="IPR050175">
    <property type="entry name" value="Complex_I_Subunit_2"/>
</dbReference>
<dbReference type="InterPro" id="IPR010933">
    <property type="entry name" value="NADH_DH_su2_C"/>
</dbReference>
<dbReference type="InterPro" id="IPR003917">
    <property type="entry name" value="NADH_UbQ_OxRdtase_chain2"/>
</dbReference>
<dbReference type="InterPro" id="IPR001750">
    <property type="entry name" value="ND/Mrp_TM"/>
</dbReference>
<dbReference type="PANTHER" id="PTHR46552">
    <property type="entry name" value="NADH-UBIQUINONE OXIDOREDUCTASE CHAIN 2"/>
    <property type="match status" value="1"/>
</dbReference>
<dbReference type="PANTHER" id="PTHR46552:SF1">
    <property type="entry name" value="NADH-UBIQUINONE OXIDOREDUCTASE CHAIN 2"/>
    <property type="match status" value="1"/>
</dbReference>
<dbReference type="Pfam" id="PF06444">
    <property type="entry name" value="NADH_dehy_S2_C"/>
    <property type="match status" value="1"/>
</dbReference>
<dbReference type="Pfam" id="PF00361">
    <property type="entry name" value="Proton_antipo_M"/>
    <property type="match status" value="1"/>
</dbReference>
<dbReference type="PRINTS" id="PR01436">
    <property type="entry name" value="NADHDHGNASE2"/>
</dbReference>